<gene>
    <name evidence="1" type="primary">rps8</name>
    <name type="ordered locus">Maeo_1399</name>
</gene>
<feature type="chain" id="PRO_1000051784" description="Small ribosomal subunit protein uS8">
    <location>
        <begin position="1"/>
        <end position="130"/>
    </location>
</feature>
<sequence length="130" mass="14507">MSLMDPLANALNHLSNCERVGKDVAYVQPASKLIGRVFKVMQDKGYMGNFEYIEDGKAGIYKVELTGHINKCGAVRPRYAVKKTEFEKFEKRYLPAKGFGLLIVSTPKGLMTHDEAKSNGLGGRLISYIY</sequence>
<protein>
    <recommendedName>
        <fullName evidence="1">Small ribosomal subunit protein uS8</fullName>
    </recommendedName>
    <alternativeName>
        <fullName evidence="2">30S ribosomal protein S8</fullName>
    </alternativeName>
</protein>
<accession>A6UWV3</accession>
<dbReference type="EMBL" id="CP000743">
    <property type="protein sequence ID" value="ABR56975.1"/>
    <property type="molecule type" value="Genomic_DNA"/>
</dbReference>
<dbReference type="RefSeq" id="WP_011974107.1">
    <property type="nucleotide sequence ID" value="NC_009635.1"/>
</dbReference>
<dbReference type="SMR" id="A6UWV3"/>
<dbReference type="STRING" id="419665.Maeo_1399"/>
<dbReference type="GeneID" id="5326271"/>
<dbReference type="KEGG" id="mae:Maeo_1399"/>
<dbReference type="eggNOG" id="arCOG04091">
    <property type="taxonomic scope" value="Archaea"/>
</dbReference>
<dbReference type="HOGENOM" id="CLU_098428_1_1_2"/>
<dbReference type="OrthoDB" id="5670at2157"/>
<dbReference type="Proteomes" id="UP000001106">
    <property type="component" value="Chromosome"/>
</dbReference>
<dbReference type="GO" id="GO:1990904">
    <property type="term" value="C:ribonucleoprotein complex"/>
    <property type="evidence" value="ECO:0007669"/>
    <property type="project" value="UniProtKB-KW"/>
</dbReference>
<dbReference type="GO" id="GO:0005840">
    <property type="term" value="C:ribosome"/>
    <property type="evidence" value="ECO:0007669"/>
    <property type="project" value="UniProtKB-KW"/>
</dbReference>
<dbReference type="GO" id="GO:0019843">
    <property type="term" value="F:rRNA binding"/>
    <property type="evidence" value="ECO:0007669"/>
    <property type="project" value="UniProtKB-UniRule"/>
</dbReference>
<dbReference type="GO" id="GO:0003735">
    <property type="term" value="F:structural constituent of ribosome"/>
    <property type="evidence" value="ECO:0007669"/>
    <property type="project" value="InterPro"/>
</dbReference>
<dbReference type="GO" id="GO:0006412">
    <property type="term" value="P:translation"/>
    <property type="evidence" value="ECO:0007669"/>
    <property type="project" value="UniProtKB-UniRule"/>
</dbReference>
<dbReference type="Gene3D" id="3.30.1370.30">
    <property type="match status" value="1"/>
</dbReference>
<dbReference type="Gene3D" id="3.30.1490.10">
    <property type="match status" value="1"/>
</dbReference>
<dbReference type="HAMAP" id="MF_01302_A">
    <property type="entry name" value="Ribosomal_uS8_A"/>
    <property type="match status" value="1"/>
</dbReference>
<dbReference type="InterPro" id="IPR000630">
    <property type="entry name" value="Ribosomal_uS8"/>
</dbReference>
<dbReference type="InterPro" id="IPR047863">
    <property type="entry name" value="Ribosomal_uS8_CS"/>
</dbReference>
<dbReference type="InterPro" id="IPR035987">
    <property type="entry name" value="Ribosomal_uS8_sf"/>
</dbReference>
<dbReference type="NCBIfam" id="NF003115">
    <property type="entry name" value="PRK04034.1"/>
    <property type="match status" value="1"/>
</dbReference>
<dbReference type="PANTHER" id="PTHR11758">
    <property type="entry name" value="40S RIBOSOMAL PROTEIN S15A"/>
    <property type="match status" value="1"/>
</dbReference>
<dbReference type="Pfam" id="PF00410">
    <property type="entry name" value="Ribosomal_S8"/>
    <property type="match status" value="1"/>
</dbReference>
<dbReference type="SUPFAM" id="SSF56047">
    <property type="entry name" value="Ribosomal protein S8"/>
    <property type="match status" value="1"/>
</dbReference>
<dbReference type="PROSITE" id="PS00053">
    <property type="entry name" value="RIBOSOMAL_S8"/>
    <property type="match status" value="1"/>
</dbReference>
<organism>
    <name type="scientific">Methanococcus aeolicus (strain ATCC BAA-1280 / DSM 17508 / OCM 812 / Nankai-3)</name>
    <dbReference type="NCBI Taxonomy" id="419665"/>
    <lineage>
        <taxon>Archaea</taxon>
        <taxon>Methanobacteriati</taxon>
        <taxon>Methanobacteriota</taxon>
        <taxon>Methanomada group</taxon>
        <taxon>Methanococci</taxon>
        <taxon>Methanococcales</taxon>
        <taxon>Methanococcaceae</taxon>
        <taxon>Methanococcus</taxon>
    </lineage>
</organism>
<proteinExistence type="inferred from homology"/>
<name>RS8_META3</name>
<keyword id="KW-0687">Ribonucleoprotein</keyword>
<keyword id="KW-0689">Ribosomal protein</keyword>
<keyword id="KW-0694">RNA-binding</keyword>
<keyword id="KW-0699">rRNA-binding</keyword>
<evidence type="ECO:0000255" key="1">
    <source>
        <dbReference type="HAMAP-Rule" id="MF_01302"/>
    </source>
</evidence>
<evidence type="ECO:0000305" key="2"/>
<comment type="function">
    <text evidence="1">One of the primary rRNA binding proteins, it binds directly to 16S rRNA central domain where it helps coordinate assembly of the platform of the 30S subunit.</text>
</comment>
<comment type="subunit">
    <text evidence="1">Part of the 30S ribosomal subunit.</text>
</comment>
<comment type="similarity">
    <text evidence="1">Belongs to the universal ribosomal protein uS8 family.</text>
</comment>
<reference key="1">
    <citation type="submission" date="2007-06" db="EMBL/GenBank/DDBJ databases">
        <title>Complete sequence of Methanococcus aeolicus Nankai-3.</title>
        <authorList>
            <consortium name="US DOE Joint Genome Institute"/>
            <person name="Copeland A."/>
            <person name="Lucas S."/>
            <person name="Lapidus A."/>
            <person name="Barry K."/>
            <person name="Glavina del Rio T."/>
            <person name="Dalin E."/>
            <person name="Tice H."/>
            <person name="Pitluck S."/>
            <person name="Chain P."/>
            <person name="Malfatti S."/>
            <person name="Shin M."/>
            <person name="Vergez L."/>
            <person name="Schmutz J."/>
            <person name="Larimer F."/>
            <person name="Land M."/>
            <person name="Hauser L."/>
            <person name="Kyrpides N."/>
            <person name="Lykidis A."/>
            <person name="Sieprawska-Lupa M."/>
            <person name="Whitman W.B."/>
            <person name="Richardson P."/>
        </authorList>
    </citation>
    <scope>NUCLEOTIDE SEQUENCE [LARGE SCALE GENOMIC DNA]</scope>
    <source>
        <strain>ATCC BAA-1280 / DSM 17508 / OCM 812 / Nankai-3</strain>
    </source>
</reference>